<dbReference type="EMBL" id="CP000776">
    <property type="protein sequence ID" value="ABS51369.1"/>
    <property type="molecule type" value="Genomic_DNA"/>
</dbReference>
<dbReference type="RefSeq" id="WP_012108632.1">
    <property type="nucleotide sequence ID" value="NC_009714.1"/>
</dbReference>
<dbReference type="SMR" id="A7I1F3"/>
<dbReference type="STRING" id="360107.CHAB381_0770"/>
<dbReference type="KEGG" id="cha:CHAB381_0770"/>
<dbReference type="eggNOG" id="COG0227">
    <property type="taxonomic scope" value="Bacteria"/>
</dbReference>
<dbReference type="HOGENOM" id="CLU_064548_7_2_7"/>
<dbReference type="OrthoDB" id="9805609at2"/>
<dbReference type="Proteomes" id="UP000002407">
    <property type="component" value="Chromosome"/>
</dbReference>
<dbReference type="GO" id="GO:1990904">
    <property type="term" value="C:ribonucleoprotein complex"/>
    <property type="evidence" value="ECO:0007669"/>
    <property type="project" value="UniProtKB-KW"/>
</dbReference>
<dbReference type="GO" id="GO:0005840">
    <property type="term" value="C:ribosome"/>
    <property type="evidence" value="ECO:0007669"/>
    <property type="project" value="UniProtKB-KW"/>
</dbReference>
<dbReference type="GO" id="GO:0003735">
    <property type="term" value="F:structural constituent of ribosome"/>
    <property type="evidence" value="ECO:0007669"/>
    <property type="project" value="InterPro"/>
</dbReference>
<dbReference type="GO" id="GO:0006412">
    <property type="term" value="P:translation"/>
    <property type="evidence" value="ECO:0007669"/>
    <property type="project" value="UniProtKB-UniRule"/>
</dbReference>
<dbReference type="Gene3D" id="2.30.170.40">
    <property type="entry name" value="Ribosomal protein L28/L24"/>
    <property type="match status" value="1"/>
</dbReference>
<dbReference type="HAMAP" id="MF_00373">
    <property type="entry name" value="Ribosomal_bL28"/>
    <property type="match status" value="1"/>
</dbReference>
<dbReference type="InterPro" id="IPR050096">
    <property type="entry name" value="Bacterial_rp_bL28"/>
</dbReference>
<dbReference type="InterPro" id="IPR026569">
    <property type="entry name" value="Ribosomal_bL28"/>
</dbReference>
<dbReference type="InterPro" id="IPR034704">
    <property type="entry name" value="Ribosomal_bL28/bL31-like_sf"/>
</dbReference>
<dbReference type="InterPro" id="IPR001383">
    <property type="entry name" value="Ribosomal_bL28_bact-type"/>
</dbReference>
<dbReference type="InterPro" id="IPR037147">
    <property type="entry name" value="Ribosomal_bL28_sf"/>
</dbReference>
<dbReference type="NCBIfam" id="TIGR00009">
    <property type="entry name" value="L28"/>
    <property type="match status" value="1"/>
</dbReference>
<dbReference type="PANTHER" id="PTHR39080">
    <property type="entry name" value="50S RIBOSOMAL PROTEIN L28"/>
    <property type="match status" value="1"/>
</dbReference>
<dbReference type="PANTHER" id="PTHR39080:SF1">
    <property type="entry name" value="LARGE RIBOSOMAL SUBUNIT PROTEIN BL28A"/>
    <property type="match status" value="1"/>
</dbReference>
<dbReference type="Pfam" id="PF00830">
    <property type="entry name" value="Ribosomal_L28"/>
    <property type="match status" value="1"/>
</dbReference>
<dbReference type="SUPFAM" id="SSF143800">
    <property type="entry name" value="L28p-like"/>
    <property type="match status" value="1"/>
</dbReference>
<sequence>MSRRCAITGKSAMNGHSVSHANNKTKKKFGVNLRTIRIKLEDGSTTKIKVAASTLRTMKKASK</sequence>
<protein>
    <recommendedName>
        <fullName evidence="1">Large ribosomal subunit protein bL28</fullName>
    </recommendedName>
    <alternativeName>
        <fullName evidence="3">50S ribosomal protein L28</fullName>
    </alternativeName>
</protein>
<gene>
    <name evidence="1" type="primary">rpmB</name>
    <name type="ordered locus">CHAB381_0770</name>
</gene>
<keyword id="KW-1185">Reference proteome</keyword>
<keyword id="KW-0687">Ribonucleoprotein</keyword>
<keyword id="KW-0689">Ribosomal protein</keyword>
<name>RL28_CAMHC</name>
<proteinExistence type="inferred from homology"/>
<accession>A7I1F3</accession>
<evidence type="ECO:0000255" key="1">
    <source>
        <dbReference type="HAMAP-Rule" id="MF_00373"/>
    </source>
</evidence>
<evidence type="ECO:0000256" key="2">
    <source>
        <dbReference type="SAM" id="MobiDB-lite"/>
    </source>
</evidence>
<evidence type="ECO:0000305" key="3"/>
<feature type="chain" id="PRO_1000007200" description="Large ribosomal subunit protein bL28">
    <location>
        <begin position="1"/>
        <end position="63"/>
    </location>
</feature>
<feature type="region of interest" description="Disordered" evidence="2">
    <location>
        <begin position="1"/>
        <end position="22"/>
    </location>
</feature>
<comment type="similarity">
    <text evidence="1">Belongs to the bacterial ribosomal protein bL28 family.</text>
</comment>
<reference key="1">
    <citation type="submission" date="2007-07" db="EMBL/GenBank/DDBJ databases">
        <title>Complete genome sequence of Campylobacter hominis ATCC BAA-381, a commensal isolated from the human gastrointestinal tract.</title>
        <authorList>
            <person name="Fouts D.E."/>
            <person name="Mongodin E.F."/>
            <person name="Puiu D."/>
            <person name="Sebastian Y."/>
            <person name="Miller W.G."/>
            <person name="Mandrell R.E."/>
            <person name="Nelson K.E."/>
        </authorList>
    </citation>
    <scope>NUCLEOTIDE SEQUENCE [LARGE SCALE GENOMIC DNA]</scope>
    <source>
        <strain>ATCC BAA-381 / DSM 21671 / CCUG 45161 / LMG 19568 / NCTC 13146 / CH001A</strain>
    </source>
</reference>
<organism>
    <name type="scientific">Campylobacter hominis (strain ATCC BAA-381 / DSM 21671 / CCUG 45161 / LMG 19568 / NCTC 13146 / CH001A)</name>
    <dbReference type="NCBI Taxonomy" id="360107"/>
    <lineage>
        <taxon>Bacteria</taxon>
        <taxon>Pseudomonadati</taxon>
        <taxon>Campylobacterota</taxon>
        <taxon>Epsilonproteobacteria</taxon>
        <taxon>Campylobacterales</taxon>
        <taxon>Campylobacteraceae</taxon>
        <taxon>Campylobacter</taxon>
    </lineage>
</organism>